<proteinExistence type="inferred from homology"/>
<name>METK_LEGPL</name>
<dbReference type="EC" id="2.5.1.6" evidence="1"/>
<dbReference type="EMBL" id="CR628337">
    <property type="protein sequence ID" value="CAH16239.1"/>
    <property type="molecule type" value="Genomic_DNA"/>
</dbReference>
<dbReference type="RefSeq" id="WP_011215982.1">
    <property type="nucleotide sequence ID" value="NC_006369.1"/>
</dbReference>
<dbReference type="SMR" id="Q5WV18"/>
<dbReference type="KEGG" id="lpf:lpl1999"/>
<dbReference type="LegioList" id="lpl1999"/>
<dbReference type="HOGENOM" id="CLU_041802_1_1_6"/>
<dbReference type="UniPathway" id="UPA00315">
    <property type="reaction ID" value="UER00080"/>
</dbReference>
<dbReference type="Proteomes" id="UP000002517">
    <property type="component" value="Chromosome"/>
</dbReference>
<dbReference type="GO" id="GO:0005737">
    <property type="term" value="C:cytoplasm"/>
    <property type="evidence" value="ECO:0007669"/>
    <property type="project" value="UniProtKB-SubCell"/>
</dbReference>
<dbReference type="GO" id="GO:0005524">
    <property type="term" value="F:ATP binding"/>
    <property type="evidence" value="ECO:0007669"/>
    <property type="project" value="UniProtKB-UniRule"/>
</dbReference>
<dbReference type="GO" id="GO:0000287">
    <property type="term" value="F:magnesium ion binding"/>
    <property type="evidence" value="ECO:0007669"/>
    <property type="project" value="UniProtKB-UniRule"/>
</dbReference>
<dbReference type="GO" id="GO:0004478">
    <property type="term" value="F:methionine adenosyltransferase activity"/>
    <property type="evidence" value="ECO:0007669"/>
    <property type="project" value="UniProtKB-UniRule"/>
</dbReference>
<dbReference type="GO" id="GO:0006730">
    <property type="term" value="P:one-carbon metabolic process"/>
    <property type="evidence" value="ECO:0007669"/>
    <property type="project" value="UniProtKB-KW"/>
</dbReference>
<dbReference type="GO" id="GO:0006556">
    <property type="term" value="P:S-adenosylmethionine biosynthetic process"/>
    <property type="evidence" value="ECO:0007669"/>
    <property type="project" value="UniProtKB-UniRule"/>
</dbReference>
<dbReference type="CDD" id="cd18079">
    <property type="entry name" value="S-AdoMet_synt"/>
    <property type="match status" value="1"/>
</dbReference>
<dbReference type="FunFam" id="3.30.300.10:FF:000003">
    <property type="entry name" value="S-adenosylmethionine synthase"/>
    <property type="match status" value="1"/>
</dbReference>
<dbReference type="Gene3D" id="3.30.300.10">
    <property type="match status" value="3"/>
</dbReference>
<dbReference type="HAMAP" id="MF_00086">
    <property type="entry name" value="S_AdoMet_synth1"/>
    <property type="match status" value="1"/>
</dbReference>
<dbReference type="InterPro" id="IPR022631">
    <property type="entry name" value="ADOMET_SYNTHASE_CS"/>
</dbReference>
<dbReference type="InterPro" id="IPR022630">
    <property type="entry name" value="S-AdoMet_synt_C"/>
</dbReference>
<dbReference type="InterPro" id="IPR022629">
    <property type="entry name" value="S-AdoMet_synt_central"/>
</dbReference>
<dbReference type="InterPro" id="IPR022628">
    <property type="entry name" value="S-AdoMet_synt_N"/>
</dbReference>
<dbReference type="InterPro" id="IPR002133">
    <property type="entry name" value="S-AdoMet_synthetase"/>
</dbReference>
<dbReference type="InterPro" id="IPR022636">
    <property type="entry name" value="S-AdoMet_synthetase_sfam"/>
</dbReference>
<dbReference type="NCBIfam" id="TIGR01034">
    <property type="entry name" value="metK"/>
    <property type="match status" value="1"/>
</dbReference>
<dbReference type="PANTHER" id="PTHR11964">
    <property type="entry name" value="S-ADENOSYLMETHIONINE SYNTHETASE"/>
    <property type="match status" value="1"/>
</dbReference>
<dbReference type="Pfam" id="PF02773">
    <property type="entry name" value="S-AdoMet_synt_C"/>
    <property type="match status" value="1"/>
</dbReference>
<dbReference type="Pfam" id="PF02772">
    <property type="entry name" value="S-AdoMet_synt_M"/>
    <property type="match status" value="1"/>
</dbReference>
<dbReference type="Pfam" id="PF00438">
    <property type="entry name" value="S-AdoMet_synt_N"/>
    <property type="match status" value="1"/>
</dbReference>
<dbReference type="PIRSF" id="PIRSF000497">
    <property type="entry name" value="MAT"/>
    <property type="match status" value="1"/>
</dbReference>
<dbReference type="SUPFAM" id="SSF55973">
    <property type="entry name" value="S-adenosylmethionine synthetase"/>
    <property type="match status" value="3"/>
</dbReference>
<dbReference type="PROSITE" id="PS00376">
    <property type="entry name" value="ADOMET_SYNTHASE_1"/>
    <property type="match status" value="1"/>
</dbReference>
<dbReference type="PROSITE" id="PS00377">
    <property type="entry name" value="ADOMET_SYNTHASE_2"/>
    <property type="match status" value="1"/>
</dbReference>
<keyword id="KW-0067">ATP-binding</keyword>
<keyword id="KW-0963">Cytoplasm</keyword>
<keyword id="KW-0460">Magnesium</keyword>
<keyword id="KW-0479">Metal-binding</keyword>
<keyword id="KW-0547">Nucleotide-binding</keyword>
<keyword id="KW-0554">One-carbon metabolism</keyword>
<keyword id="KW-0630">Potassium</keyword>
<keyword id="KW-0808">Transferase</keyword>
<gene>
    <name evidence="1" type="primary">metK</name>
    <name type="ordered locus">lpl1999</name>
</gene>
<comment type="function">
    <text evidence="1">Catalyzes the formation of S-adenosylmethionine (AdoMet) from methionine and ATP. The overall synthetic reaction is composed of two sequential steps, AdoMet formation and the subsequent tripolyphosphate hydrolysis which occurs prior to release of AdoMet from the enzyme.</text>
</comment>
<comment type="catalytic activity">
    <reaction evidence="1">
        <text>L-methionine + ATP + H2O = S-adenosyl-L-methionine + phosphate + diphosphate</text>
        <dbReference type="Rhea" id="RHEA:21080"/>
        <dbReference type="ChEBI" id="CHEBI:15377"/>
        <dbReference type="ChEBI" id="CHEBI:30616"/>
        <dbReference type="ChEBI" id="CHEBI:33019"/>
        <dbReference type="ChEBI" id="CHEBI:43474"/>
        <dbReference type="ChEBI" id="CHEBI:57844"/>
        <dbReference type="ChEBI" id="CHEBI:59789"/>
        <dbReference type="EC" id="2.5.1.6"/>
    </reaction>
</comment>
<comment type="cofactor">
    <cofactor evidence="1">
        <name>Mg(2+)</name>
        <dbReference type="ChEBI" id="CHEBI:18420"/>
    </cofactor>
    <text evidence="1">Binds 2 divalent ions per subunit.</text>
</comment>
<comment type="cofactor">
    <cofactor evidence="1">
        <name>K(+)</name>
        <dbReference type="ChEBI" id="CHEBI:29103"/>
    </cofactor>
    <text evidence="1">Binds 1 potassium ion per subunit.</text>
</comment>
<comment type="pathway">
    <text evidence="1">Amino-acid biosynthesis; S-adenosyl-L-methionine biosynthesis; S-adenosyl-L-methionine from L-methionine: step 1/1.</text>
</comment>
<comment type="subunit">
    <text evidence="1">Homotetramer; dimer of dimers.</text>
</comment>
<comment type="subcellular location">
    <subcellularLocation>
        <location evidence="1">Cytoplasm</location>
    </subcellularLocation>
</comment>
<comment type="similarity">
    <text evidence="1">Belongs to the AdoMet synthase family.</text>
</comment>
<reference key="1">
    <citation type="journal article" date="2004" name="Nat. Genet.">
        <title>Evidence in the Legionella pneumophila genome for exploitation of host cell functions and high genome plasticity.</title>
        <authorList>
            <person name="Cazalet C."/>
            <person name="Rusniok C."/>
            <person name="Brueggemann H."/>
            <person name="Zidane N."/>
            <person name="Magnier A."/>
            <person name="Ma L."/>
            <person name="Tichit M."/>
            <person name="Jarraud S."/>
            <person name="Bouchier C."/>
            <person name="Vandenesch F."/>
            <person name="Kunst F."/>
            <person name="Etienne J."/>
            <person name="Glaser P."/>
            <person name="Buchrieser C."/>
        </authorList>
    </citation>
    <scope>NUCLEOTIDE SEQUENCE [LARGE SCALE GENOMIC DNA]</scope>
    <source>
        <strain>Lens</strain>
    </source>
</reference>
<organism>
    <name type="scientific">Legionella pneumophila (strain Lens)</name>
    <dbReference type="NCBI Taxonomy" id="297245"/>
    <lineage>
        <taxon>Bacteria</taxon>
        <taxon>Pseudomonadati</taxon>
        <taxon>Pseudomonadota</taxon>
        <taxon>Gammaproteobacteria</taxon>
        <taxon>Legionellales</taxon>
        <taxon>Legionellaceae</taxon>
        <taxon>Legionella</taxon>
    </lineage>
</organism>
<sequence>MNEVYVFTSESVSEGHPDKIADQISDAILDAILAQDPKARVACEVLVKTGMVLVGGEITTKAWVDVEDITRHVIKDIGYNSSQMGFDWESCAVLSAIGKQSPDIAQGVDNQQTKILGAGDQGLMFGYASRETDVFMPAPIAYAHRLMEKLAKARKSGQLPWLRPDAKCQLTLKYEQGMPVEVDTVVFSTQHSPDIEHKDLVEAIREEIIKSVLPAEWLNDKTRYFINPTGRFVIGGPLGDCGLTGRKIIVDTYGGMARHGGGCFSGKDPSKVDRSAAYAARHVAKNIVAAGLADKCELQISYAIGVAEPTSIFVDTFGTGRLKNSEIIDLIHTHFDLTPQGIIDQHDLLRPIYRQTATYGHYGRESFPWERLDKVAELSKAL</sequence>
<accession>Q5WV18</accession>
<protein>
    <recommendedName>
        <fullName evidence="1">S-adenosylmethionine synthase</fullName>
        <shortName evidence="1">AdoMet synthase</shortName>
        <ecNumber evidence="1">2.5.1.6</ecNumber>
    </recommendedName>
    <alternativeName>
        <fullName evidence="1">MAT</fullName>
    </alternativeName>
    <alternativeName>
        <fullName evidence="1">Methionine adenosyltransferase</fullName>
    </alternativeName>
</protein>
<feature type="chain" id="PRO_0000174539" description="S-adenosylmethionine synthase">
    <location>
        <begin position="1"/>
        <end position="382"/>
    </location>
</feature>
<feature type="region of interest" description="Flexible loop" evidence="1">
    <location>
        <begin position="100"/>
        <end position="110"/>
    </location>
</feature>
<feature type="binding site" description="in other chain" evidence="1">
    <location>
        <position position="16"/>
    </location>
    <ligand>
        <name>ATP</name>
        <dbReference type="ChEBI" id="CHEBI:30616"/>
        <note>ligand shared between two neighboring subunits</note>
    </ligand>
</feature>
<feature type="binding site" evidence="1">
    <location>
        <position position="18"/>
    </location>
    <ligand>
        <name>Mg(2+)</name>
        <dbReference type="ChEBI" id="CHEBI:18420"/>
    </ligand>
</feature>
<feature type="binding site" evidence="1">
    <location>
        <position position="44"/>
    </location>
    <ligand>
        <name>K(+)</name>
        <dbReference type="ChEBI" id="CHEBI:29103"/>
    </ligand>
</feature>
<feature type="binding site" description="in other chain" evidence="1">
    <location>
        <position position="57"/>
    </location>
    <ligand>
        <name>L-methionine</name>
        <dbReference type="ChEBI" id="CHEBI:57844"/>
        <note>ligand shared between two neighboring subunits</note>
    </ligand>
</feature>
<feature type="binding site" description="in other chain" evidence="1">
    <location>
        <position position="100"/>
    </location>
    <ligand>
        <name>L-methionine</name>
        <dbReference type="ChEBI" id="CHEBI:57844"/>
        <note>ligand shared between two neighboring subunits</note>
    </ligand>
</feature>
<feature type="binding site" description="in other chain" evidence="1">
    <location>
        <begin position="165"/>
        <end position="167"/>
    </location>
    <ligand>
        <name>ATP</name>
        <dbReference type="ChEBI" id="CHEBI:30616"/>
        <note>ligand shared between two neighboring subunits</note>
    </ligand>
</feature>
<feature type="binding site" description="in other chain" evidence="1">
    <location>
        <begin position="231"/>
        <end position="232"/>
    </location>
    <ligand>
        <name>ATP</name>
        <dbReference type="ChEBI" id="CHEBI:30616"/>
        <note>ligand shared between two neighboring subunits</note>
    </ligand>
</feature>
<feature type="binding site" evidence="1">
    <location>
        <position position="240"/>
    </location>
    <ligand>
        <name>ATP</name>
        <dbReference type="ChEBI" id="CHEBI:30616"/>
        <note>ligand shared between two neighboring subunits</note>
    </ligand>
</feature>
<feature type="binding site" evidence="1">
    <location>
        <position position="240"/>
    </location>
    <ligand>
        <name>L-methionine</name>
        <dbReference type="ChEBI" id="CHEBI:57844"/>
        <note>ligand shared between two neighboring subunits</note>
    </ligand>
</feature>
<feature type="binding site" description="in other chain" evidence="1">
    <location>
        <begin position="246"/>
        <end position="247"/>
    </location>
    <ligand>
        <name>ATP</name>
        <dbReference type="ChEBI" id="CHEBI:30616"/>
        <note>ligand shared between two neighboring subunits</note>
    </ligand>
</feature>
<feature type="binding site" evidence="1">
    <location>
        <position position="267"/>
    </location>
    <ligand>
        <name>ATP</name>
        <dbReference type="ChEBI" id="CHEBI:30616"/>
        <note>ligand shared between two neighboring subunits</note>
    </ligand>
</feature>
<feature type="binding site" description="in other chain" evidence="1">
    <location>
        <position position="271"/>
    </location>
    <ligand>
        <name>L-methionine</name>
        <dbReference type="ChEBI" id="CHEBI:57844"/>
        <note>ligand shared between two neighboring subunits</note>
    </ligand>
</feature>
<evidence type="ECO:0000255" key="1">
    <source>
        <dbReference type="HAMAP-Rule" id="MF_00086"/>
    </source>
</evidence>